<reference key="1">
    <citation type="submission" date="2006-03" db="EMBL/GenBank/DDBJ databases">
        <title>Complete sequence of Rhodopseudomonas palustris BisB18.</title>
        <authorList>
            <consortium name="US DOE Joint Genome Institute"/>
            <person name="Copeland A."/>
            <person name="Lucas S."/>
            <person name="Lapidus A."/>
            <person name="Barry K."/>
            <person name="Detter J.C."/>
            <person name="Glavina del Rio T."/>
            <person name="Hammon N."/>
            <person name="Israni S."/>
            <person name="Dalin E."/>
            <person name="Tice H."/>
            <person name="Pitluck S."/>
            <person name="Chain P."/>
            <person name="Malfatti S."/>
            <person name="Shin M."/>
            <person name="Vergez L."/>
            <person name="Schmutz J."/>
            <person name="Larimer F."/>
            <person name="Land M."/>
            <person name="Hauser L."/>
            <person name="Pelletier D.A."/>
            <person name="Kyrpides N."/>
            <person name="Anderson I."/>
            <person name="Oda Y."/>
            <person name="Harwood C.S."/>
            <person name="Richardson P."/>
        </authorList>
    </citation>
    <scope>NUCLEOTIDE SEQUENCE [LARGE SCALE GENOMIC DNA]</scope>
    <source>
        <strain>BisB18</strain>
    </source>
</reference>
<keyword id="KW-0004">4Fe-4S</keyword>
<keyword id="KW-0997">Cell inner membrane</keyword>
<keyword id="KW-1003">Cell membrane</keyword>
<keyword id="KW-0408">Iron</keyword>
<keyword id="KW-0411">Iron-sulfur</keyword>
<keyword id="KW-0472">Membrane</keyword>
<keyword id="KW-0479">Metal-binding</keyword>
<keyword id="KW-0520">NAD</keyword>
<keyword id="KW-0874">Quinone</keyword>
<keyword id="KW-1278">Translocase</keyword>
<keyword id="KW-0813">Transport</keyword>
<keyword id="KW-0830">Ubiquinone</keyword>
<proteinExistence type="inferred from homology"/>
<evidence type="ECO:0000255" key="1">
    <source>
        <dbReference type="HAMAP-Rule" id="MF_01356"/>
    </source>
</evidence>
<protein>
    <recommendedName>
        <fullName evidence="1">NADH-quinone oxidoreductase subunit B 1</fullName>
        <ecNumber evidence="1">7.1.1.-</ecNumber>
    </recommendedName>
    <alternativeName>
        <fullName evidence="1">NADH dehydrogenase I subunit B 1</fullName>
    </alternativeName>
    <alternativeName>
        <fullName evidence="1">NDH-1 subunit B 1</fullName>
    </alternativeName>
</protein>
<accession>Q215I4</accession>
<dbReference type="EC" id="7.1.1.-" evidence="1"/>
<dbReference type="EMBL" id="CP000301">
    <property type="protein sequence ID" value="ABD87952.1"/>
    <property type="molecule type" value="Genomic_DNA"/>
</dbReference>
<dbReference type="SMR" id="Q215I4"/>
<dbReference type="STRING" id="316056.RPC_2400"/>
<dbReference type="KEGG" id="rpc:RPC_2400"/>
<dbReference type="eggNOG" id="COG0377">
    <property type="taxonomic scope" value="Bacteria"/>
</dbReference>
<dbReference type="HOGENOM" id="CLU_055737_7_0_5"/>
<dbReference type="OrthoDB" id="9786737at2"/>
<dbReference type="GO" id="GO:0005886">
    <property type="term" value="C:plasma membrane"/>
    <property type="evidence" value="ECO:0007669"/>
    <property type="project" value="UniProtKB-SubCell"/>
</dbReference>
<dbReference type="GO" id="GO:0045271">
    <property type="term" value="C:respiratory chain complex I"/>
    <property type="evidence" value="ECO:0007669"/>
    <property type="project" value="TreeGrafter"/>
</dbReference>
<dbReference type="GO" id="GO:0051539">
    <property type="term" value="F:4 iron, 4 sulfur cluster binding"/>
    <property type="evidence" value="ECO:0007669"/>
    <property type="project" value="UniProtKB-KW"/>
</dbReference>
<dbReference type="GO" id="GO:0005506">
    <property type="term" value="F:iron ion binding"/>
    <property type="evidence" value="ECO:0007669"/>
    <property type="project" value="UniProtKB-UniRule"/>
</dbReference>
<dbReference type="GO" id="GO:0008137">
    <property type="term" value="F:NADH dehydrogenase (ubiquinone) activity"/>
    <property type="evidence" value="ECO:0007669"/>
    <property type="project" value="InterPro"/>
</dbReference>
<dbReference type="GO" id="GO:0050136">
    <property type="term" value="F:NADH:ubiquinone reductase (non-electrogenic) activity"/>
    <property type="evidence" value="ECO:0007669"/>
    <property type="project" value="UniProtKB-UniRule"/>
</dbReference>
<dbReference type="GO" id="GO:0048038">
    <property type="term" value="F:quinone binding"/>
    <property type="evidence" value="ECO:0007669"/>
    <property type="project" value="UniProtKB-KW"/>
</dbReference>
<dbReference type="GO" id="GO:0009060">
    <property type="term" value="P:aerobic respiration"/>
    <property type="evidence" value="ECO:0007669"/>
    <property type="project" value="TreeGrafter"/>
</dbReference>
<dbReference type="GO" id="GO:0015990">
    <property type="term" value="P:electron transport coupled proton transport"/>
    <property type="evidence" value="ECO:0007669"/>
    <property type="project" value="TreeGrafter"/>
</dbReference>
<dbReference type="FunFam" id="3.40.50.12280:FF:000001">
    <property type="entry name" value="NADH-quinone oxidoreductase subunit B 2"/>
    <property type="match status" value="1"/>
</dbReference>
<dbReference type="Gene3D" id="3.40.50.12280">
    <property type="match status" value="1"/>
</dbReference>
<dbReference type="HAMAP" id="MF_01356">
    <property type="entry name" value="NDH1_NuoB"/>
    <property type="match status" value="1"/>
</dbReference>
<dbReference type="InterPro" id="IPR006137">
    <property type="entry name" value="NADH_UbQ_OxRdtase-like_20kDa"/>
</dbReference>
<dbReference type="InterPro" id="IPR006138">
    <property type="entry name" value="NADH_UQ_OxRdtase_20Kd_su"/>
</dbReference>
<dbReference type="NCBIfam" id="TIGR01957">
    <property type="entry name" value="nuoB_fam"/>
    <property type="match status" value="1"/>
</dbReference>
<dbReference type="NCBIfam" id="NF005012">
    <property type="entry name" value="PRK06411.1"/>
    <property type="match status" value="1"/>
</dbReference>
<dbReference type="PANTHER" id="PTHR11995">
    <property type="entry name" value="NADH DEHYDROGENASE"/>
    <property type="match status" value="1"/>
</dbReference>
<dbReference type="PANTHER" id="PTHR11995:SF14">
    <property type="entry name" value="NADH DEHYDROGENASE [UBIQUINONE] IRON-SULFUR PROTEIN 7, MITOCHONDRIAL"/>
    <property type="match status" value="1"/>
</dbReference>
<dbReference type="Pfam" id="PF01058">
    <property type="entry name" value="Oxidored_q6"/>
    <property type="match status" value="1"/>
</dbReference>
<dbReference type="SUPFAM" id="SSF56770">
    <property type="entry name" value="HydA/Nqo6-like"/>
    <property type="match status" value="1"/>
</dbReference>
<dbReference type="PROSITE" id="PS01150">
    <property type="entry name" value="COMPLEX1_20K"/>
    <property type="match status" value="1"/>
</dbReference>
<gene>
    <name evidence="1" type="primary">nuoB1</name>
    <name type="ordered locus">RPC_2400</name>
</gene>
<feature type="chain" id="PRO_0000376340" description="NADH-quinone oxidoreductase subunit B 1">
    <location>
        <begin position="1"/>
        <end position="201"/>
    </location>
</feature>
<feature type="binding site" evidence="1">
    <location>
        <position position="80"/>
    </location>
    <ligand>
        <name>[4Fe-4S] cluster</name>
        <dbReference type="ChEBI" id="CHEBI:49883"/>
    </ligand>
</feature>
<feature type="binding site" evidence="1">
    <location>
        <position position="81"/>
    </location>
    <ligand>
        <name>[4Fe-4S] cluster</name>
        <dbReference type="ChEBI" id="CHEBI:49883"/>
    </ligand>
</feature>
<feature type="binding site" evidence="1">
    <location>
        <position position="145"/>
    </location>
    <ligand>
        <name>[4Fe-4S] cluster</name>
        <dbReference type="ChEBI" id="CHEBI:49883"/>
    </ligand>
</feature>
<feature type="binding site" evidence="1">
    <location>
        <position position="175"/>
    </location>
    <ligand>
        <name>[4Fe-4S] cluster</name>
        <dbReference type="ChEBI" id="CHEBI:49883"/>
    </ligand>
</feature>
<sequence length="201" mass="22022">MGLSPNATTAGPRLPRPLVAPAATGILDPRTGRPVGADDRFFLEVNNELADKGFFVAATDDLITWARTGSLMWMTFGLACCAVEMMQMSMPRYDAERFGFAPRASPRQSDVMIVAGTLTNKMAPALRKVYDQMPEPRYVISMGSCANGGGYYHYSYAVVRGCDRIVPIDIYVPGCPPTAEALLYGVMLLQKKIRRTGTIER</sequence>
<comment type="function">
    <text evidence="1">NDH-1 shuttles electrons from NADH, via FMN and iron-sulfur (Fe-S) centers, to quinones in the respiratory chain. The immediate electron acceptor for the enzyme in this species is believed to be ubiquinone. Couples the redox reaction to proton translocation (for every two electrons transferred, four hydrogen ions are translocated across the cytoplasmic membrane), and thus conserves the redox energy in a proton gradient.</text>
</comment>
<comment type="catalytic activity">
    <reaction evidence="1">
        <text>a quinone + NADH + 5 H(+)(in) = a quinol + NAD(+) + 4 H(+)(out)</text>
        <dbReference type="Rhea" id="RHEA:57888"/>
        <dbReference type="ChEBI" id="CHEBI:15378"/>
        <dbReference type="ChEBI" id="CHEBI:24646"/>
        <dbReference type="ChEBI" id="CHEBI:57540"/>
        <dbReference type="ChEBI" id="CHEBI:57945"/>
        <dbReference type="ChEBI" id="CHEBI:132124"/>
    </reaction>
</comment>
<comment type="cofactor">
    <cofactor evidence="1">
        <name>[4Fe-4S] cluster</name>
        <dbReference type="ChEBI" id="CHEBI:49883"/>
    </cofactor>
    <text evidence="1">Binds 1 [4Fe-4S] cluster.</text>
</comment>
<comment type="subunit">
    <text evidence="1">NDH-1 is composed of 14 different subunits. Subunits NuoB, C, D, E, F, and G constitute the peripheral sector of the complex.</text>
</comment>
<comment type="subcellular location">
    <subcellularLocation>
        <location evidence="1">Cell inner membrane</location>
        <topology evidence="1">Peripheral membrane protein</topology>
        <orientation evidence="1">Cytoplasmic side</orientation>
    </subcellularLocation>
</comment>
<comment type="similarity">
    <text evidence="1">Belongs to the complex I 20 kDa subunit family.</text>
</comment>
<name>NUOB1_RHOPB</name>
<organism>
    <name type="scientific">Rhodopseudomonas palustris (strain BisB18)</name>
    <dbReference type="NCBI Taxonomy" id="316056"/>
    <lineage>
        <taxon>Bacteria</taxon>
        <taxon>Pseudomonadati</taxon>
        <taxon>Pseudomonadota</taxon>
        <taxon>Alphaproteobacteria</taxon>
        <taxon>Hyphomicrobiales</taxon>
        <taxon>Nitrobacteraceae</taxon>
        <taxon>Rhodopseudomonas</taxon>
    </lineage>
</organism>